<feature type="chain" id="PRO_0000091520" description="Sulfate adenylyltransferase subunit 1">
    <location>
        <begin position="1"/>
        <end position="473"/>
    </location>
</feature>
<feature type="domain" description="tr-type G">
    <location>
        <begin position="19"/>
        <end position="238"/>
    </location>
</feature>
<feature type="region of interest" description="G1" evidence="1">
    <location>
        <begin position="28"/>
        <end position="35"/>
    </location>
</feature>
<feature type="region of interest" description="G2" evidence="1">
    <location>
        <begin position="86"/>
        <end position="90"/>
    </location>
</feature>
<feature type="region of interest" description="G3" evidence="1">
    <location>
        <begin position="107"/>
        <end position="110"/>
    </location>
</feature>
<feature type="region of interest" description="G4" evidence="1">
    <location>
        <begin position="162"/>
        <end position="165"/>
    </location>
</feature>
<feature type="region of interest" description="G5" evidence="1">
    <location>
        <begin position="200"/>
        <end position="202"/>
    </location>
</feature>
<feature type="binding site" evidence="2">
    <location>
        <begin position="28"/>
        <end position="35"/>
    </location>
    <ligand>
        <name>GTP</name>
        <dbReference type="ChEBI" id="CHEBI:37565"/>
    </ligand>
</feature>
<feature type="binding site" evidence="2">
    <location>
        <begin position="107"/>
        <end position="111"/>
    </location>
    <ligand>
        <name>GTP</name>
        <dbReference type="ChEBI" id="CHEBI:37565"/>
    </ligand>
</feature>
<feature type="binding site" evidence="2">
    <location>
        <begin position="162"/>
        <end position="165"/>
    </location>
    <ligand>
        <name>GTP</name>
        <dbReference type="ChEBI" id="CHEBI:37565"/>
    </ligand>
</feature>
<reference key="1">
    <citation type="journal article" date="2000" name="Nature">
        <title>Genome sequence of the endocellular bacterial symbiont of aphids Buchnera sp. APS.</title>
        <authorList>
            <person name="Shigenobu S."/>
            <person name="Watanabe H."/>
            <person name="Hattori M."/>
            <person name="Sakaki Y."/>
            <person name="Ishikawa H."/>
        </authorList>
    </citation>
    <scope>NUCLEOTIDE SEQUENCE [LARGE SCALE GENOMIC DNA]</scope>
    <source>
        <strain>APS</strain>
    </source>
</reference>
<gene>
    <name evidence="2" type="primary">cysN</name>
    <name type="ordered locus">BU423</name>
</gene>
<comment type="function">
    <text evidence="2">With CysD forms the ATP sulfurylase (ATPS) that catalyzes the adenylation of sulfate producing adenosine 5'-phosphosulfate (APS) and diphosphate, the first enzymatic step in sulfur assimilation pathway. APS synthesis involves the formation of a high-energy phosphoric-sulfuric acid anhydride bond driven by GTP hydrolysis by CysN coupled to ATP hydrolysis by CysD.</text>
</comment>
<comment type="catalytic activity">
    <reaction evidence="2">
        <text>sulfate + ATP + H(+) = adenosine 5'-phosphosulfate + diphosphate</text>
        <dbReference type="Rhea" id="RHEA:18133"/>
        <dbReference type="ChEBI" id="CHEBI:15378"/>
        <dbReference type="ChEBI" id="CHEBI:16189"/>
        <dbReference type="ChEBI" id="CHEBI:30616"/>
        <dbReference type="ChEBI" id="CHEBI:33019"/>
        <dbReference type="ChEBI" id="CHEBI:58243"/>
        <dbReference type="EC" id="2.7.7.4"/>
    </reaction>
</comment>
<comment type="pathway">
    <text evidence="2">Sulfur metabolism; hydrogen sulfide biosynthesis; sulfite from sulfate: step 1/3.</text>
</comment>
<comment type="subunit">
    <text evidence="2">Heterodimer composed of CysD, the smaller subunit, and CysN.</text>
</comment>
<comment type="similarity">
    <text evidence="2 3">Belongs to the TRAFAC class translation factor GTPase superfamily. Classic translation factor GTPase family. CysN/NodQ subfamily.</text>
</comment>
<sequence>MNINMKDNFKKWLDLQQKKTLLKFLTCGSVDDGKSTLIGRLLHDTKQIYDDQLFFLKSDSKRHGTQGNEIDLALVVDGLQSEREQGITIDVAYRYFSTNKRKFIIADTPGHEQYTRNMATGASTCDLSILLVDARKGLSEQTYRHSFISTLLGIKYLIVAINKMDLVNYKQEIFENIKKDFLIFSKKLANDLNIIFIPMSALLGENIVFKTKLMPWYQGVTLLSFLETIKIKNSISSEELRFPVQYINRPNSDFRGYSGILLSGRMHVGQTIKILPENINSRVSRIVTFDKELKKAEIGESITVVLKDEIDINRGDFFVNIDSILQPSQEAIIDIVWMTDNILLAGESYNVKLSGKKIRVYIKEILFKLDVNTLKKVKSHSLVLNSIGRVKIYFSKPVIFDNYSENRMTGNMIFIDLLTNITVGAGMIVNSLDKKGKIPSNKQKDFESDFYDLIIRHFPHWNIPKILMKKVYK</sequence>
<proteinExistence type="inferred from homology"/>
<accession>P57498</accession>
<organism>
    <name type="scientific">Buchnera aphidicola subsp. Acyrthosiphon pisum (strain APS)</name>
    <name type="common">Acyrthosiphon pisum symbiotic bacterium</name>
    <dbReference type="NCBI Taxonomy" id="107806"/>
    <lineage>
        <taxon>Bacteria</taxon>
        <taxon>Pseudomonadati</taxon>
        <taxon>Pseudomonadota</taxon>
        <taxon>Gammaproteobacteria</taxon>
        <taxon>Enterobacterales</taxon>
        <taxon>Erwiniaceae</taxon>
        <taxon>Buchnera</taxon>
    </lineage>
</organism>
<evidence type="ECO:0000250" key="1"/>
<evidence type="ECO:0000255" key="2">
    <source>
        <dbReference type="HAMAP-Rule" id="MF_00062"/>
    </source>
</evidence>
<evidence type="ECO:0000305" key="3"/>
<keyword id="KW-0067">ATP-binding</keyword>
<keyword id="KW-0342">GTP-binding</keyword>
<keyword id="KW-0547">Nucleotide-binding</keyword>
<keyword id="KW-0548">Nucleotidyltransferase</keyword>
<keyword id="KW-1185">Reference proteome</keyword>
<keyword id="KW-0808">Transferase</keyword>
<protein>
    <recommendedName>
        <fullName evidence="2">Sulfate adenylyltransferase subunit 1</fullName>
        <ecNumber evidence="2">2.7.7.4</ecNumber>
    </recommendedName>
    <alternativeName>
        <fullName evidence="2">ATP-sulfurylase large subunit</fullName>
    </alternativeName>
    <alternativeName>
        <fullName evidence="2">Sulfate adenylate transferase</fullName>
        <shortName evidence="2">SAT</shortName>
    </alternativeName>
</protein>
<dbReference type="EC" id="2.7.7.4" evidence="2"/>
<dbReference type="EMBL" id="BA000003">
    <property type="protein sequence ID" value="BAB13121.1"/>
    <property type="molecule type" value="Genomic_DNA"/>
</dbReference>
<dbReference type="RefSeq" id="NP_240235.1">
    <property type="nucleotide sequence ID" value="NC_002528.1"/>
</dbReference>
<dbReference type="RefSeq" id="WP_010896109.1">
    <property type="nucleotide sequence ID" value="NC_002528.1"/>
</dbReference>
<dbReference type="SMR" id="P57498"/>
<dbReference type="STRING" id="563178.BUAP5A_416"/>
<dbReference type="EnsemblBacteria" id="BAB13121">
    <property type="protein sequence ID" value="BAB13121"/>
    <property type="gene ID" value="BAB13121"/>
</dbReference>
<dbReference type="KEGG" id="buc:BU423"/>
<dbReference type="PATRIC" id="fig|107806.10.peg.432"/>
<dbReference type="eggNOG" id="COG2895">
    <property type="taxonomic scope" value="Bacteria"/>
</dbReference>
<dbReference type="HOGENOM" id="CLU_007265_5_2_6"/>
<dbReference type="UniPathway" id="UPA00140">
    <property type="reaction ID" value="UER00204"/>
</dbReference>
<dbReference type="Proteomes" id="UP000001806">
    <property type="component" value="Chromosome"/>
</dbReference>
<dbReference type="GO" id="GO:0005524">
    <property type="term" value="F:ATP binding"/>
    <property type="evidence" value="ECO:0007669"/>
    <property type="project" value="UniProtKB-KW"/>
</dbReference>
<dbReference type="GO" id="GO:0005525">
    <property type="term" value="F:GTP binding"/>
    <property type="evidence" value="ECO:0007669"/>
    <property type="project" value="UniProtKB-UniRule"/>
</dbReference>
<dbReference type="GO" id="GO:0003924">
    <property type="term" value="F:GTPase activity"/>
    <property type="evidence" value="ECO:0007669"/>
    <property type="project" value="InterPro"/>
</dbReference>
<dbReference type="GO" id="GO:0004781">
    <property type="term" value="F:sulfate adenylyltransferase (ATP) activity"/>
    <property type="evidence" value="ECO:0007669"/>
    <property type="project" value="UniProtKB-UniRule"/>
</dbReference>
<dbReference type="GO" id="GO:0070814">
    <property type="term" value="P:hydrogen sulfide biosynthetic process"/>
    <property type="evidence" value="ECO:0007669"/>
    <property type="project" value="UniProtKB-UniRule"/>
</dbReference>
<dbReference type="GO" id="GO:0000103">
    <property type="term" value="P:sulfate assimilation"/>
    <property type="evidence" value="ECO:0007669"/>
    <property type="project" value="UniProtKB-UniRule"/>
</dbReference>
<dbReference type="CDD" id="cd04166">
    <property type="entry name" value="CysN_ATPS"/>
    <property type="match status" value="1"/>
</dbReference>
<dbReference type="CDD" id="cd03695">
    <property type="entry name" value="CysN_NodQ_II"/>
    <property type="match status" value="1"/>
</dbReference>
<dbReference type="CDD" id="cd04095">
    <property type="entry name" value="CysN_NoDQ_III"/>
    <property type="match status" value="1"/>
</dbReference>
<dbReference type="FunFam" id="3.40.50.300:FF:000119">
    <property type="entry name" value="Sulfate adenylyltransferase subunit 1"/>
    <property type="match status" value="1"/>
</dbReference>
<dbReference type="Gene3D" id="3.40.50.300">
    <property type="entry name" value="P-loop containing nucleotide triphosphate hydrolases"/>
    <property type="match status" value="1"/>
</dbReference>
<dbReference type="Gene3D" id="2.40.30.10">
    <property type="entry name" value="Translation factors"/>
    <property type="match status" value="2"/>
</dbReference>
<dbReference type="HAMAP" id="MF_00062">
    <property type="entry name" value="Sulf_adenylyltr_sub1"/>
    <property type="match status" value="1"/>
</dbReference>
<dbReference type="InterPro" id="IPR041757">
    <property type="entry name" value="CysN_GTP-bd"/>
</dbReference>
<dbReference type="InterPro" id="IPR044138">
    <property type="entry name" value="CysN_II"/>
</dbReference>
<dbReference type="InterPro" id="IPR044139">
    <property type="entry name" value="CysN_NoDQ_III"/>
</dbReference>
<dbReference type="InterPro" id="IPR031157">
    <property type="entry name" value="G_TR_CS"/>
</dbReference>
<dbReference type="InterPro" id="IPR054696">
    <property type="entry name" value="GTP-eEF1A_C"/>
</dbReference>
<dbReference type="InterPro" id="IPR027417">
    <property type="entry name" value="P-loop_NTPase"/>
</dbReference>
<dbReference type="InterPro" id="IPR005225">
    <property type="entry name" value="Small_GTP-bd"/>
</dbReference>
<dbReference type="InterPro" id="IPR011779">
    <property type="entry name" value="SO4_adenylTrfase_lsu"/>
</dbReference>
<dbReference type="InterPro" id="IPR000795">
    <property type="entry name" value="T_Tr_GTP-bd_dom"/>
</dbReference>
<dbReference type="InterPro" id="IPR050100">
    <property type="entry name" value="TRAFAC_GTPase_members"/>
</dbReference>
<dbReference type="InterPro" id="IPR009000">
    <property type="entry name" value="Transl_B-barrel_sf"/>
</dbReference>
<dbReference type="InterPro" id="IPR009001">
    <property type="entry name" value="Transl_elong_EF1A/Init_IF2_C"/>
</dbReference>
<dbReference type="NCBIfam" id="TIGR02034">
    <property type="entry name" value="CysN"/>
    <property type="match status" value="1"/>
</dbReference>
<dbReference type="NCBIfam" id="NF003478">
    <property type="entry name" value="PRK05124.1"/>
    <property type="match status" value="1"/>
</dbReference>
<dbReference type="NCBIfam" id="TIGR00231">
    <property type="entry name" value="small_GTP"/>
    <property type="match status" value="1"/>
</dbReference>
<dbReference type="PANTHER" id="PTHR23115">
    <property type="entry name" value="TRANSLATION FACTOR"/>
    <property type="match status" value="1"/>
</dbReference>
<dbReference type="Pfam" id="PF22594">
    <property type="entry name" value="GTP-eEF1A_C"/>
    <property type="match status" value="1"/>
</dbReference>
<dbReference type="Pfam" id="PF00009">
    <property type="entry name" value="GTP_EFTU"/>
    <property type="match status" value="1"/>
</dbReference>
<dbReference type="PRINTS" id="PR00315">
    <property type="entry name" value="ELONGATNFCT"/>
</dbReference>
<dbReference type="SUPFAM" id="SSF50465">
    <property type="entry name" value="EF-Tu/eEF-1alpha/eIF2-gamma C-terminal domain"/>
    <property type="match status" value="1"/>
</dbReference>
<dbReference type="SUPFAM" id="SSF52540">
    <property type="entry name" value="P-loop containing nucleoside triphosphate hydrolases"/>
    <property type="match status" value="1"/>
</dbReference>
<dbReference type="SUPFAM" id="SSF50447">
    <property type="entry name" value="Translation proteins"/>
    <property type="match status" value="1"/>
</dbReference>
<dbReference type="PROSITE" id="PS00301">
    <property type="entry name" value="G_TR_1"/>
    <property type="match status" value="1"/>
</dbReference>
<dbReference type="PROSITE" id="PS51722">
    <property type="entry name" value="G_TR_2"/>
    <property type="match status" value="1"/>
</dbReference>
<name>CYSN_BUCAI</name>